<dbReference type="EMBL" id="CP000921">
    <property type="protein sequence ID" value="ACO23153.1"/>
    <property type="molecule type" value="Genomic_DNA"/>
</dbReference>
<dbReference type="RefSeq" id="WP_000351913.1">
    <property type="nucleotide sequence ID" value="NC_012469.1"/>
</dbReference>
<dbReference type="SMR" id="C1CTA6"/>
<dbReference type="KEGG" id="snt:SPT_1793"/>
<dbReference type="HOGENOM" id="CLU_038686_3_3_9"/>
<dbReference type="GO" id="GO:0005737">
    <property type="term" value="C:cytoplasm"/>
    <property type="evidence" value="ECO:0007669"/>
    <property type="project" value="UniProtKB-SubCell"/>
</dbReference>
<dbReference type="GO" id="GO:0051301">
    <property type="term" value="P:cell division"/>
    <property type="evidence" value="ECO:0007669"/>
    <property type="project" value="UniProtKB-KW"/>
</dbReference>
<dbReference type="GO" id="GO:0007059">
    <property type="term" value="P:chromosome segregation"/>
    <property type="evidence" value="ECO:0007669"/>
    <property type="project" value="UniProtKB-UniRule"/>
</dbReference>
<dbReference type="GO" id="GO:0006260">
    <property type="term" value="P:DNA replication"/>
    <property type="evidence" value="ECO:0007669"/>
    <property type="project" value="UniProtKB-UniRule"/>
</dbReference>
<dbReference type="Gene3D" id="6.10.250.2410">
    <property type="match status" value="1"/>
</dbReference>
<dbReference type="Gene3D" id="1.10.10.580">
    <property type="entry name" value="Structural maintenance of chromosome 1. Chain E"/>
    <property type="match status" value="1"/>
</dbReference>
<dbReference type="HAMAP" id="MF_01805">
    <property type="entry name" value="ScpA"/>
    <property type="match status" value="1"/>
</dbReference>
<dbReference type="InterPro" id="IPR003768">
    <property type="entry name" value="ScpA"/>
</dbReference>
<dbReference type="InterPro" id="IPR023093">
    <property type="entry name" value="ScpA-like_C"/>
</dbReference>
<dbReference type="NCBIfam" id="NF000993">
    <property type="entry name" value="PRK00104.1-2"/>
    <property type="match status" value="1"/>
</dbReference>
<dbReference type="PANTHER" id="PTHR33969">
    <property type="entry name" value="SEGREGATION AND CONDENSATION PROTEIN A"/>
    <property type="match status" value="1"/>
</dbReference>
<dbReference type="PANTHER" id="PTHR33969:SF2">
    <property type="entry name" value="SEGREGATION AND CONDENSATION PROTEIN A"/>
    <property type="match status" value="1"/>
</dbReference>
<dbReference type="Pfam" id="PF02616">
    <property type="entry name" value="SMC_ScpA"/>
    <property type="match status" value="1"/>
</dbReference>
<keyword id="KW-0131">Cell cycle</keyword>
<keyword id="KW-0132">Cell division</keyword>
<keyword id="KW-0159">Chromosome partition</keyword>
<keyword id="KW-0963">Cytoplasm</keyword>
<name>SCPA_STRZT</name>
<organism>
    <name type="scientific">Streptococcus pneumoniae (strain Taiwan19F-14)</name>
    <dbReference type="NCBI Taxonomy" id="487213"/>
    <lineage>
        <taxon>Bacteria</taxon>
        <taxon>Bacillati</taxon>
        <taxon>Bacillota</taxon>
        <taxon>Bacilli</taxon>
        <taxon>Lactobacillales</taxon>
        <taxon>Streptococcaceae</taxon>
        <taxon>Streptococcus</taxon>
    </lineage>
</organism>
<reference key="1">
    <citation type="journal article" date="2010" name="Genome Biol.">
        <title>Structure and dynamics of the pan-genome of Streptococcus pneumoniae and closely related species.</title>
        <authorList>
            <person name="Donati C."/>
            <person name="Hiller N.L."/>
            <person name="Tettelin H."/>
            <person name="Muzzi A."/>
            <person name="Croucher N.J."/>
            <person name="Angiuoli S.V."/>
            <person name="Oggioni M."/>
            <person name="Dunning Hotopp J.C."/>
            <person name="Hu F.Z."/>
            <person name="Riley D.R."/>
            <person name="Covacci A."/>
            <person name="Mitchell T.J."/>
            <person name="Bentley S.D."/>
            <person name="Kilian M."/>
            <person name="Ehrlich G.D."/>
            <person name="Rappuoli R."/>
            <person name="Moxon E.R."/>
            <person name="Masignani V."/>
        </authorList>
    </citation>
    <scope>NUCLEOTIDE SEQUENCE [LARGE SCALE GENOMIC DNA]</scope>
    <source>
        <strain>Taiwan19F-14</strain>
    </source>
</reference>
<feature type="chain" id="PRO_1000187577" description="Segregation and condensation protein A">
    <location>
        <begin position="1"/>
        <end position="242"/>
    </location>
</feature>
<accession>C1CTA6</accession>
<sequence>MDIKLKDFEGPLDLLLHLVSKYQMDIYDVPITEVIEQYLAYVSTLQAMRLEVTGEYMVMASQLMLIKSRKLLPKVAEVTDLGDDLEQDLLSQIEEYRKFKLLGEHLESKHQERAQYYSKAPTELIYEDAELVHDKTTIDLFLAFSNILAKKKEEFAQNHTTILRDEYKIEDMMIIVKESLIGRDQLRLQDLFKEAQNVQEVITLFLATLELIKTQELILVQEESFGDIYLMEKKEESQVPQS</sequence>
<evidence type="ECO:0000255" key="1">
    <source>
        <dbReference type="HAMAP-Rule" id="MF_01805"/>
    </source>
</evidence>
<comment type="function">
    <text evidence="1">Participates in chromosomal partition during cell division. May act via the formation of a condensin-like complex containing Smc and ScpB that pull DNA away from mid-cell into both cell halves.</text>
</comment>
<comment type="subunit">
    <text evidence="1">Component of a cohesin-like complex composed of ScpA, ScpB and the Smc homodimer, in which ScpA and ScpB bind to the head domain of Smc. The presence of the three proteins is required for the association of the complex with DNA.</text>
</comment>
<comment type="subcellular location">
    <subcellularLocation>
        <location evidence="1">Cytoplasm</location>
    </subcellularLocation>
    <text evidence="1">Associated with two foci at the outer edges of the nucleoid region in young cells, and at four foci within both cell halves in older cells.</text>
</comment>
<comment type="similarity">
    <text evidence="1">Belongs to the ScpA family.</text>
</comment>
<protein>
    <recommendedName>
        <fullName evidence="1">Segregation and condensation protein A</fullName>
    </recommendedName>
</protein>
<proteinExistence type="inferred from homology"/>
<gene>
    <name evidence="1" type="primary">scpA</name>
    <name type="ordered locus">SPT_1793</name>
</gene>